<evidence type="ECO:0000255" key="1">
    <source>
        <dbReference type="HAMAP-Rule" id="MF_00713"/>
    </source>
</evidence>
<evidence type="ECO:0000256" key="2">
    <source>
        <dbReference type="SAM" id="MobiDB-lite"/>
    </source>
</evidence>
<proteinExistence type="inferred from homology"/>
<name>GCSPB_NITMU</name>
<protein>
    <recommendedName>
        <fullName evidence="1">Probable glycine dehydrogenase (decarboxylating) subunit 2</fullName>
        <ecNumber evidence="1">1.4.4.2</ecNumber>
    </recommendedName>
    <alternativeName>
        <fullName evidence="1">Glycine cleavage system P-protein subunit 2</fullName>
    </alternativeName>
    <alternativeName>
        <fullName evidence="1">Glycine decarboxylase subunit 2</fullName>
    </alternativeName>
    <alternativeName>
        <fullName evidence="1">Glycine dehydrogenase (aminomethyl-transferring) subunit 2</fullName>
    </alternativeName>
</protein>
<feature type="chain" id="PRO_1000045700" description="Probable glycine dehydrogenase (decarboxylating) subunit 2">
    <location>
        <begin position="1"/>
        <end position="500"/>
    </location>
</feature>
<feature type="region of interest" description="Disordered" evidence="2">
    <location>
        <begin position="1"/>
        <end position="25"/>
    </location>
</feature>
<feature type="modified residue" description="N6-(pyridoxal phosphate)lysine" evidence="1">
    <location>
        <position position="263"/>
    </location>
</feature>
<comment type="function">
    <text evidence="1">The glycine cleavage system catalyzes the degradation of glycine. The P protein binds the alpha-amino group of glycine through its pyridoxal phosphate cofactor; CO(2) is released and the remaining methylamine moiety is then transferred to the lipoamide cofactor of the H protein.</text>
</comment>
<comment type="catalytic activity">
    <reaction evidence="1">
        <text>N(6)-[(R)-lipoyl]-L-lysyl-[glycine-cleavage complex H protein] + glycine + H(+) = N(6)-[(R)-S(8)-aminomethyldihydrolipoyl]-L-lysyl-[glycine-cleavage complex H protein] + CO2</text>
        <dbReference type="Rhea" id="RHEA:24304"/>
        <dbReference type="Rhea" id="RHEA-COMP:10494"/>
        <dbReference type="Rhea" id="RHEA-COMP:10495"/>
        <dbReference type="ChEBI" id="CHEBI:15378"/>
        <dbReference type="ChEBI" id="CHEBI:16526"/>
        <dbReference type="ChEBI" id="CHEBI:57305"/>
        <dbReference type="ChEBI" id="CHEBI:83099"/>
        <dbReference type="ChEBI" id="CHEBI:83143"/>
        <dbReference type="EC" id="1.4.4.2"/>
    </reaction>
</comment>
<comment type="cofactor">
    <cofactor evidence="1">
        <name>pyridoxal 5'-phosphate</name>
        <dbReference type="ChEBI" id="CHEBI:597326"/>
    </cofactor>
</comment>
<comment type="subunit">
    <text evidence="1">The glycine cleavage system is composed of four proteins: P, T, L and H. In this organism, the P 'protein' is a heterodimer of two subunits.</text>
</comment>
<comment type="similarity">
    <text evidence="1">Belongs to the GcvP family. C-terminal subunit subfamily.</text>
</comment>
<accession>Q2YCK3</accession>
<sequence length="500" mass="54643">MLIFEHSRPGRRNYSQSPKAAEATDIPEKLLRKTLPLLPEVSEMDAVRHYTRLSQKNFSIDTHFYPLGSCTMKYNPRACNSLAMLPQFLARHPRSPESTGQGFLACMYELQEILKDVTGMAGVSLTPMAGAQGELIGIAMIRAYHESRGDTARTEIIVPDAAHGTNPATAVMCGYKVVEIATDKEGNVDMAALKAAVGPKTAGLMLTNPSTLGVFEENVAEMSRIVHQAGGLLYYDGANLNAILGKVKPGDMGFDVIHINLHKTFSTPHGGGGPGSAPVGVAPRLLPFMPVPIVAFENGTYRWQTEKDIPQSIGRLSAHMGNAGVLLRAYVYVRLLGAEGMHRVAEFAALNANYLMAELRKAGFEIAYPNRRASHEFIVTLKDLKEKTGVTAMNLAKRLLDKGYHAPTTYFPLLVPECLLIEPAETESKETLDAFVTAMKEILEETRTQPDLVKSAPHTTPVRRLDDVKAARELDLAWKAPTRNITRTETLTPIPTVSVA</sequence>
<keyword id="KW-0560">Oxidoreductase</keyword>
<keyword id="KW-0663">Pyridoxal phosphate</keyword>
<keyword id="KW-1185">Reference proteome</keyword>
<gene>
    <name evidence="1" type="primary">gcvPB</name>
    <name type="ordered locus">Nmul_A0210</name>
</gene>
<dbReference type="EC" id="1.4.4.2" evidence="1"/>
<dbReference type="EMBL" id="CP000103">
    <property type="protein sequence ID" value="ABB73518.1"/>
    <property type="molecule type" value="Genomic_DNA"/>
</dbReference>
<dbReference type="SMR" id="Q2YCK3"/>
<dbReference type="STRING" id="323848.Nmul_A0210"/>
<dbReference type="KEGG" id="nmu:Nmul_A0210"/>
<dbReference type="eggNOG" id="COG1003">
    <property type="taxonomic scope" value="Bacteria"/>
</dbReference>
<dbReference type="HOGENOM" id="CLU_004620_5_0_4"/>
<dbReference type="OrthoDB" id="9801272at2"/>
<dbReference type="Proteomes" id="UP000002718">
    <property type="component" value="Chromosome"/>
</dbReference>
<dbReference type="GO" id="GO:0005829">
    <property type="term" value="C:cytosol"/>
    <property type="evidence" value="ECO:0007669"/>
    <property type="project" value="TreeGrafter"/>
</dbReference>
<dbReference type="GO" id="GO:0005960">
    <property type="term" value="C:glycine cleavage complex"/>
    <property type="evidence" value="ECO:0007669"/>
    <property type="project" value="TreeGrafter"/>
</dbReference>
<dbReference type="GO" id="GO:0016594">
    <property type="term" value="F:glycine binding"/>
    <property type="evidence" value="ECO:0007669"/>
    <property type="project" value="TreeGrafter"/>
</dbReference>
<dbReference type="GO" id="GO:0004375">
    <property type="term" value="F:glycine dehydrogenase (decarboxylating) activity"/>
    <property type="evidence" value="ECO:0007669"/>
    <property type="project" value="UniProtKB-EC"/>
</dbReference>
<dbReference type="GO" id="GO:0030170">
    <property type="term" value="F:pyridoxal phosphate binding"/>
    <property type="evidence" value="ECO:0007669"/>
    <property type="project" value="TreeGrafter"/>
</dbReference>
<dbReference type="GO" id="GO:0019464">
    <property type="term" value="P:glycine decarboxylation via glycine cleavage system"/>
    <property type="evidence" value="ECO:0007669"/>
    <property type="project" value="UniProtKB-UniRule"/>
</dbReference>
<dbReference type="CDD" id="cd00613">
    <property type="entry name" value="GDC-P"/>
    <property type="match status" value="1"/>
</dbReference>
<dbReference type="FunFam" id="3.40.640.10:FF:000224">
    <property type="entry name" value="Probable glycine dehydrogenase (decarboxylating) subunit 2"/>
    <property type="match status" value="1"/>
</dbReference>
<dbReference type="FunFam" id="3.90.1150.10:FF:000014">
    <property type="entry name" value="Probable glycine dehydrogenase (decarboxylating) subunit 2"/>
    <property type="match status" value="1"/>
</dbReference>
<dbReference type="Gene3D" id="6.20.440.10">
    <property type="match status" value="1"/>
</dbReference>
<dbReference type="Gene3D" id="3.90.1150.10">
    <property type="entry name" value="Aspartate Aminotransferase, domain 1"/>
    <property type="match status" value="1"/>
</dbReference>
<dbReference type="Gene3D" id="3.40.640.10">
    <property type="entry name" value="Type I PLP-dependent aspartate aminotransferase-like (Major domain)"/>
    <property type="match status" value="1"/>
</dbReference>
<dbReference type="HAMAP" id="MF_00713">
    <property type="entry name" value="GcvPB"/>
    <property type="match status" value="1"/>
</dbReference>
<dbReference type="InterPro" id="IPR000192">
    <property type="entry name" value="Aminotrans_V_dom"/>
</dbReference>
<dbReference type="InterPro" id="IPR023012">
    <property type="entry name" value="GcvPB"/>
</dbReference>
<dbReference type="InterPro" id="IPR049316">
    <property type="entry name" value="GDC-P_C"/>
</dbReference>
<dbReference type="InterPro" id="IPR020581">
    <property type="entry name" value="GDC_P"/>
</dbReference>
<dbReference type="InterPro" id="IPR015424">
    <property type="entry name" value="PyrdxlP-dep_Trfase"/>
</dbReference>
<dbReference type="InterPro" id="IPR015421">
    <property type="entry name" value="PyrdxlP-dep_Trfase_major"/>
</dbReference>
<dbReference type="InterPro" id="IPR015422">
    <property type="entry name" value="PyrdxlP-dep_Trfase_small"/>
</dbReference>
<dbReference type="NCBIfam" id="NF003346">
    <property type="entry name" value="PRK04366.1"/>
    <property type="match status" value="1"/>
</dbReference>
<dbReference type="PANTHER" id="PTHR11773:SF1">
    <property type="entry name" value="GLYCINE DEHYDROGENASE (DECARBOXYLATING), MITOCHONDRIAL"/>
    <property type="match status" value="1"/>
</dbReference>
<dbReference type="PANTHER" id="PTHR11773">
    <property type="entry name" value="GLYCINE DEHYDROGENASE, DECARBOXYLATING"/>
    <property type="match status" value="1"/>
</dbReference>
<dbReference type="Pfam" id="PF00266">
    <property type="entry name" value="Aminotran_5"/>
    <property type="match status" value="1"/>
</dbReference>
<dbReference type="Pfam" id="PF21478">
    <property type="entry name" value="GcvP2_C"/>
    <property type="match status" value="1"/>
</dbReference>
<dbReference type="SUPFAM" id="SSF53383">
    <property type="entry name" value="PLP-dependent transferases"/>
    <property type="match status" value="1"/>
</dbReference>
<organism>
    <name type="scientific">Nitrosospira multiformis (strain ATCC 25196 / NCIMB 11849 / C 71)</name>
    <dbReference type="NCBI Taxonomy" id="323848"/>
    <lineage>
        <taxon>Bacteria</taxon>
        <taxon>Pseudomonadati</taxon>
        <taxon>Pseudomonadota</taxon>
        <taxon>Betaproteobacteria</taxon>
        <taxon>Nitrosomonadales</taxon>
        <taxon>Nitrosomonadaceae</taxon>
        <taxon>Nitrosospira</taxon>
    </lineage>
</organism>
<reference key="1">
    <citation type="submission" date="2005-08" db="EMBL/GenBank/DDBJ databases">
        <title>Complete sequence of chromosome 1 of Nitrosospira multiformis ATCC 25196.</title>
        <authorList>
            <person name="Copeland A."/>
            <person name="Lucas S."/>
            <person name="Lapidus A."/>
            <person name="Barry K."/>
            <person name="Detter J.C."/>
            <person name="Glavina T."/>
            <person name="Hammon N."/>
            <person name="Israni S."/>
            <person name="Pitluck S."/>
            <person name="Chain P."/>
            <person name="Malfatti S."/>
            <person name="Shin M."/>
            <person name="Vergez L."/>
            <person name="Schmutz J."/>
            <person name="Larimer F."/>
            <person name="Land M."/>
            <person name="Hauser L."/>
            <person name="Kyrpides N."/>
            <person name="Lykidis A."/>
            <person name="Richardson P."/>
        </authorList>
    </citation>
    <scope>NUCLEOTIDE SEQUENCE [LARGE SCALE GENOMIC DNA]</scope>
    <source>
        <strain>ATCC 25196 / NCIMB 11849 / C 71</strain>
    </source>
</reference>